<evidence type="ECO:0000269" key="1">
    <source>
    </source>
</evidence>
<evidence type="ECO:0000269" key="2">
    <source>
    </source>
</evidence>
<evidence type="ECO:0000269" key="3">
    <source>
    </source>
</evidence>
<evidence type="ECO:0000305" key="4"/>
<comment type="function">
    <text evidence="2">Functions as a component of the Arp2/3 complex which is involved in regulation of actin polymerization and together with an activating nucleation-promoting factor (NPF) mediates the formation of branched actin networks. Seems to contact the pointed end of the daughter actin filament. The Arp2/3 complex is involved in organizing the actin system in cell motility and chemotaxis, in phagocytosis and macropinocytosis, at late steps of endosome processing, and in mitosis. In concert with a group of other proteins, the Arp2/3 complex plays a general role in the rapid activation and adaptation of the actin system to its multiple functions.</text>
</comment>
<comment type="subunit">
    <text evidence="1 3">Component of the Arp2/3 complex composed of arpB/Arp2, arpC/Arp3, arcA/p41-arc, arcB/p34-arc, arcC/p21-arc, arcD/p20-arc and arcE/p16-arc. Interacts with carmil (via the region between the LRR domain and COOH-terminal proline-rich domain); carmil is required for Arp2/3-dependent actin nucleation. Arp2/3 complex, MyoB, MyoC, and the alpha and beta subunits of capping protein all form a larger complex with carmil.</text>
</comment>
<comment type="subcellular location">
    <subcellularLocation>
        <location>Cytoplasm</location>
        <location>Cytoskeleton</location>
    </subcellularLocation>
    <subcellularLocation>
        <location>Cytoplasm</location>
        <location>Cytosol</location>
    </subcellularLocation>
    <subcellularLocation>
        <location>Cytoplasm</location>
        <location>Cell cortex</location>
    </subcellularLocation>
    <subcellularLocation>
        <location>Cell projection</location>
        <location>Pseudopodium</location>
    </subcellularLocation>
</comment>
<comment type="similarity">
    <text evidence="4">Belongs to the ARPC3 family.</text>
</comment>
<reference key="1">
    <citation type="journal article" date="2001" name="Cell Motil. Cytoskeleton">
        <title>Dynamics of the Dictyostelium Arp2/3 complex in endocytosis, cytokinesis, and chemotaxis.</title>
        <authorList>
            <person name="Insall R."/>
            <person name="Mueller-Taubenberger A."/>
            <person name="Machesky L."/>
            <person name="Koehler J."/>
            <person name="Simmeth E."/>
            <person name="Atkinson S.J."/>
            <person name="Weber I."/>
            <person name="Gerisch G."/>
        </authorList>
    </citation>
    <scope>NUCLEOTIDE SEQUENCE [MRNA]</scope>
    <scope>FUNCTION</scope>
    <scope>SUBCELLULAR LOCATION</scope>
    <source>
        <strain>AX3</strain>
    </source>
</reference>
<reference key="2">
    <citation type="journal article" date="2005" name="Nature">
        <title>The genome of the social amoeba Dictyostelium discoideum.</title>
        <authorList>
            <person name="Eichinger L."/>
            <person name="Pachebat J.A."/>
            <person name="Gloeckner G."/>
            <person name="Rajandream M.A."/>
            <person name="Sucgang R."/>
            <person name="Berriman M."/>
            <person name="Song J."/>
            <person name="Olsen R."/>
            <person name="Szafranski K."/>
            <person name="Xu Q."/>
            <person name="Tunggal B."/>
            <person name="Kummerfeld S."/>
            <person name="Madera M."/>
            <person name="Konfortov B.A."/>
            <person name="Rivero F."/>
            <person name="Bankier A.T."/>
            <person name="Lehmann R."/>
            <person name="Hamlin N."/>
            <person name="Davies R."/>
            <person name="Gaudet P."/>
            <person name="Fey P."/>
            <person name="Pilcher K."/>
            <person name="Chen G."/>
            <person name="Saunders D."/>
            <person name="Sodergren E.J."/>
            <person name="Davis P."/>
            <person name="Kerhornou A."/>
            <person name="Nie X."/>
            <person name="Hall N."/>
            <person name="Anjard C."/>
            <person name="Hemphill L."/>
            <person name="Bason N."/>
            <person name="Farbrother P."/>
            <person name="Desany B."/>
            <person name="Just E."/>
            <person name="Morio T."/>
            <person name="Rost R."/>
            <person name="Churcher C.M."/>
            <person name="Cooper J."/>
            <person name="Haydock S."/>
            <person name="van Driessche N."/>
            <person name="Cronin A."/>
            <person name="Goodhead I."/>
            <person name="Muzny D.M."/>
            <person name="Mourier T."/>
            <person name="Pain A."/>
            <person name="Lu M."/>
            <person name="Harper D."/>
            <person name="Lindsay R."/>
            <person name="Hauser H."/>
            <person name="James K.D."/>
            <person name="Quiles M."/>
            <person name="Madan Babu M."/>
            <person name="Saito T."/>
            <person name="Buchrieser C."/>
            <person name="Wardroper A."/>
            <person name="Felder M."/>
            <person name="Thangavelu M."/>
            <person name="Johnson D."/>
            <person name="Knights A."/>
            <person name="Loulseged H."/>
            <person name="Mungall K.L."/>
            <person name="Oliver K."/>
            <person name="Price C."/>
            <person name="Quail M.A."/>
            <person name="Urushihara H."/>
            <person name="Hernandez J."/>
            <person name="Rabbinowitsch E."/>
            <person name="Steffen D."/>
            <person name="Sanders M."/>
            <person name="Ma J."/>
            <person name="Kohara Y."/>
            <person name="Sharp S."/>
            <person name="Simmonds M.N."/>
            <person name="Spiegler S."/>
            <person name="Tivey A."/>
            <person name="Sugano S."/>
            <person name="White B."/>
            <person name="Walker D."/>
            <person name="Woodward J.R."/>
            <person name="Winckler T."/>
            <person name="Tanaka Y."/>
            <person name="Shaulsky G."/>
            <person name="Schleicher M."/>
            <person name="Weinstock G.M."/>
            <person name="Rosenthal A."/>
            <person name="Cox E.C."/>
            <person name="Chisholm R.L."/>
            <person name="Gibbs R.A."/>
            <person name="Loomis W.F."/>
            <person name="Platzer M."/>
            <person name="Kay R.R."/>
            <person name="Williams J.G."/>
            <person name="Dear P.H."/>
            <person name="Noegel A.A."/>
            <person name="Barrell B.G."/>
            <person name="Kuspa A."/>
        </authorList>
    </citation>
    <scope>NUCLEOTIDE SEQUENCE [LARGE SCALE GENOMIC DNA]</scope>
    <source>
        <strain>AX4</strain>
    </source>
</reference>
<reference key="3">
    <citation type="journal article" date="2001" name="J. Cell Biol.">
        <title>The Dictyostelium CARMIL protein links capping protein and the Arp2/3 complex to type I myosins through their SH3 domains.</title>
        <authorList>
            <person name="Jung G."/>
            <person name="Remmert K."/>
            <person name="Wu X."/>
            <person name="Volosky J.M."/>
            <person name="Hammer J.A. III"/>
        </authorList>
    </citation>
    <scope>PROTEIN SEQUENCE OF 2-15</scope>
    <scope>SUBCELLULAR LOCATION</scope>
    <scope>SUBUNIT</scope>
</reference>
<reference key="4">
    <citation type="journal article" date="2007" name="Protein Expr. Purif.">
        <title>Vectors for expression of proteins with single or combinatorial fluorescent protein and tandem affinity purification tags in Dictyostelium.</title>
        <authorList>
            <person name="Meima M.E."/>
            <person name="Weening K.E."/>
            <person name="Schaap P."/>
        </authorList>
    </citation>
    <scope>IDENTIFICATION IN THE ARP2/3 COMPLEX</scope>
    <scope>IDENTIFICATION BY MASS SPECTROMETRY</scope>
</reference>
<accession>O96624</accession>
<accession>Q54CP5</accession>
<proteinExistence type="evidence at protein level"/>
<protein>
    <recommendedName>
        <fullName>Actin-related protein 2/3 complex subunit 3</fullName>
    </recommendedName>
    <alternativeName>
        <fullName>Arp2/3 complex 21 kDa subunit</fullName>
        <shortName>p21-ARC</shortName>
    </alternativeName>
</protein>
<organism>
    <name type="scientific">Dictyostelium discoideum</name>
    <name type="common">Social amoeba</name>
    <dbReference type="NCBI Taxonomy" id="44689"/>
    <lineage>
        <taxon>Eukaryota</taxon>
        <taxon>Amoebozoa</taxon>
        <taxon>Evosea</taxon>
        <taxon>Eumycetozoa</taxon>
        <taxon>Dictyostelia</taxon>
        <taxon>Dictyosteliales</taxon>
        <taxon>Dictyosteliaceae</taxon>
        <taxon>Dictyostelium</taxon>
    </lineage>
</organism>
<name>ARPC3_DICDI</name>
<feature type="chain" id="PRO_0000124045" description="Actin-related protein 2/3 complex subunit 3">
    <location>
        <begin position="1"/>
        <end position="174"/>
    </location>
</feature>
<dbReference type="EMBL" id="AF095932">
    <property type="protein sequence ID" value="AAC99779.1"/>
    <property type="molecule type" value="mRNA"/>
</dbReference>
<dbReference type="EMBL" id="AAFI02000197">
    <property type="protein sequence ID" value="EAL60951.1"/>
    <property type="molecule type" value="Genomic_DNA"/>
</dbReference>
<dbReference type="RefSeq" id="XP_629371.1">
    <property type="nucleotide sequence ID" value="XM_629369.1"/>
</dbReference>
<dbReference type="SMR" id="O96624"/>
<dbReference type="FunCoup" id="O96624">
    <property type="interactions" value="594"/>
</dbReference>
<dbReference type="STRING" id="44689.O96624"/>
<dbReference type="PaxDb" id="44689-DDB0201632"/>
<dbReference type="EnsemblProtists" id="EAL60951">
    <property type="protein sequence ID" value="EAL60951"/>
    <property type="gene ID" value="DDB_G0292804"/>
</dbReference>
<dbReference type="GeneID" id="8628888"/>
<dbReference type="KEGG" id="ddi:DDB_G0292804"/>
<dbReference type="dictyBase" id="DDB_G0292804">
    <property type="gene designation" value="arcC"/>
</dbReference>
<dbReference type="VEuPathDB" id="AmoebaDB:DDB_G0292804"/>
<dbReference type="eggNOG" id="KOG3155">
    <property type="taxonomic scope" value="Eukaryota"/>
</dbReference>
<dbReference type="HOGENOM" id="CLU_094365_1_0_1"/>
<dbReference type="InParanoid" id="O96624"/>
<dbReference type="OMA" id="TPSKWWL"/>
<dbReference type="PhylomeDB" id="O96624"/>
<dbReference type="Reactome" id="R-DDI-2029482">
    <property type="pathway name" value="Regulation of actin dynamics for phagocytic cup formation"/>
</dbReference>
<dbReference type="Reactome" id="R-DDI-5663213">
    <property type="pathway name" value="RHO GTPases Activate WASPs and WAVEs"/>
</dbReference>
<dbReference type="PRO" id="PR:O96624"/>
<dbReference type="Proteomes" id="UP000002195">
    <property type="component" value="Chromosome 6"/>
</dbReference>
<dbReference type="GO" id="GO:0005885">
    <property type="term" value="C:Arp2/3 protein complex"/>
    <property type="evidence" value="ECO:0000314"/>
    <property type="project" value="dictyBase"/>
</dbReference>
<dbReference type="GO" id="GO:0005938">
    <property type="term" value="C:cell cortex"/>
    <property type="evidence" value="ECO:0007669"/>
    <property type="project" value="UniProtKB-SubCell"/>
</dbReference>
<dbReference type="GO" id="GO:0005829">
    <property type="term" value="C:cytosol"/>
    <property type="evidence" value="ECO:0007669"/>
    <property type="project" value="UniProtKB-SubCell"/>
</dbReference>
<dbReference type="GO" id="GO:0031143">
    <property type="term" value="C:pseudopodium"/>
    <property type="evidence" value="ECO:0007669"/>
    <property type="project" value="UniProtKB-SubCell"/>
</dbReference>
<dbReference type="GO" id="GO:0051015">
    <property type="term" value="F:actin filament binding"/>
    <property type="evidence" value="ECO:0000304"/>
    <property type="project" value="dictyBase"/>
</dbReference>
<dbReference type="GO" id="GO:0030041">
    <property type="term" value="P:actin filament polymerization"/>
    <property type="evidence" value="ECO:0000304"/>
    <property type="project" value="dictyBase"/>
</dbReference>
<dbReference type="GO" id="GO:0045010">
    <property type="term" value="P:actin nucleation"/>
    <property type="evidence" value="ECO:0000304"/>
    <property type="project" value="dictyBase"/>
</dbReference>
<dbReference type="GO" id="GO:0034314">
    <property type="term" value="P:Arp2/3 complex-mediated actin nucleation"/>
    <property type="evidence" value="ECO:0000318"/>
    <property type="project" value="GO_Central"/>
</dbReference>
<dbReference type="GO" id="GO:0006887">
    <property type="term" value="P:exocytosis"/>
    <property type="evidence" value="ECO:0000270"/>
    <property type="project" value="dictyBase"/>
</dbReference>
<dbReference type="GO" id="GO:0006909">
    <property type="term" value="P:phagocytosis"/>
    <property type="evidence" value="ECO:0000270"/>
    <property type="project" value="dictyBase"/>
</dbReference>
<dbReference type="GO" id="GO:0030833">
    <property type="term" value="P:regulation of actin filament polymerization"/>
    <property type="evidence" value="ECO:0007669"/>
    <property type="project" value="InterPro"/>
</dbReference>
<dbReference type="Gene3D" id="1.10.1760.10">
    <property type="entry name" value="Actin-related protein 2/3 complex subunit 3"/>
    <property type="match status" value="1"/>
</dbReference>
<dbReference type="InterPro" id="IPR007204">
    <property type="entry name" value="ARPC3"/>
</dbReference>
<dbReference type="InterPro" id="IPR036753">
    <property type="entry name" value="ARPC3_sf"/>
</dbReference>
<dbReference type="PANTHER" id="PTHR12391">
    <property type="entry name" value="ARP2/3 COMPLEX 21 KD SUBUNIT"/>
    <property type="match status" value="1"/>
</dbReference>
<dbReference type="Pfam" id="PF04062">
    <property type="entry name" value="P21-Arc"/>
    <property type="match status" value="1"/>
</dbReference>
<dbReference type="PIRSF" id="PIRSF016315">
    <property type="entry name" value="ARP2/3_P21-Arc"/>
    <property type="match status" value="1"/>
</dbReference>
<dbReference type="SUPFAM" id="SSF69060">
    <property type="entry name" value="Arp2/3 complex 21 kDa subunit ARPC3"/>
    <property type="match status" value="1"/>
</dbReference>
<sequence length="174" mass="19548">MVYHSQFNDESAGFRLVGNVPILPLKTTHKGPAPKGDANSVDIIDEALDLFKANILFRNFEVQGNGDRVLIYLTLYITKCLLKIAPMNKADAEKALFLIAQEQFSIPGESAFPLGGLVTVPNTRDAADTLRQYFTQLRLELGVRLCQRVYAVDPSKANKWWICFSKRKFLNKAL</sequence>
<gene>
    <name type="primary">arcC</name>
    <name type="synonym">Arc18</name>
    <name type="synonym">arpF</name>
    <name type="ORF">DDB_G0292804</name>
</gene>
<keyword id="KW-0009">Actin-binding</keyword>
<keyword id="KW-0966">Cell projection</keyword>
<keyword id="KW-0963">Cytoplasm</keyword>
<keyword id="KW-0206">Cytoskeleton</keyword>
<keyword id="KW-0903">Direct protein sequencing</keyword>
<keyword id="KW-1185">Reference proteome</keyword>